<comment type="subcellular location">
    <subcellularLocation>
        <location evidence="2">Secreted</location>
    </subcellularLocation>
</comment>
<comment type="tissue specificity">
    <text evidence="2">Component of the acid-insoluble and acid-soluble organic matrix of calcified layers of the shell (at protein level).</text>
</comment>
<dbReference type="EMBL" id="FC619462">
    <property type="status" value="NOT_ANNOTATED_CDS"/>
    <property type="molecule type" value="mRNA"/>
</dbReference>
<dbReference type="EMBL" id="FC647185">
    <property type="status" value="NOT_ANNOTATED_CDS"/>
    <property type="molecule type" value="mRNA"/>
</dbReference>
<dbReference type="GO" id="GO:0005576">
    <property type="term" value="C:extracellular region"/>
    <property type="evidence" value="ECO:0007669"/>
    <property type="project" value="UniProtKB-SubCell"/>
</dbReference>
<evidence type="ECO:0000255" key="1"/>
<evidence type="ECO:0000269" key="2">
    <source>
    </source>
</evidence>
<evidence type="ECO:0000269" key="3">
    <source ref="1"/>
</evidence>
<evidence type="ECO:0000305" key="4"/>
<organism>
    <name type="scientific">Lottia gigantea</name>
    <name type="common">Giant owl limpet</name>
    <dbReference type="NCBI Taxonomy" id="225164"/>
    <lineage>
        <taxon>Eukaryota</taxon>
        <taxon>Metazoa</taxon>
        <taxon>Spiralia</taxon>
        <taxon>Lophotrochozoa</taxon>
        <taxon>Mollusca</taxon>
        <taxon>Gastropoda</taxon>
        <taxon>Patellogastropoda</taxon>
        <taxon>Lottioidea</taxon>
        <taxon>Lottiidae</taxon>
        <taxon>Lottia</taxon>
    </lineage>
</organism>
<reference evidence="4" key="1">
    <citation type="submission" date="2007-12" db="EMBL/GenBank/DDBJ databases">
        <title>DOE Joint Genome Institute Lottia gigantea EST project.</title>
        <authorList>
            <person name="Richardson P."/>
            <person name="Lucas S."/>
            <person name="Rokhsar D."/>
            <person name="Wang M."/>
            <person name="Lindquist E.A."/>
        </authorList>
    </citation>
    <scope>NUCLEOTIDE SEQUENCE [LARGE SCALE MRNA]</scope>
    <scope>IDENTIFICATION</scope>
    <source>
        <tissue evidence="3">Gonad</tissue>
        <tissue evidence="3">Mantle</tissue>
    </source>
</reference>
<reference key="2">
    <citation type="journal article" date="2013" name="FEBS J.">
        <title>The shell-forming proteome of Lottia gigantea reveals both deep conservations and lineage-specific novelties.</title>
        <authorList>
            <person name="Marie B."/>
            <person name="Jackson D.J."/>
            <person name="Ramos-Silva P."/>
            <person name="Zanella-Cleon I."/>
            <person name="Guichard N."/>
            <person name="Marin F."/>
        </authorList>
    </citation>
    <scope>PROTEIN SEQUENCE OF 44-96</scope>
    <scope>SUBCELLULAR LOCATION</scope>
    <scope>TISSUE SPECIFICITY</scope>
    <source>
        <tissue>Shell</tissue>
    </source>
</reference>
<name>GMP_LOTGI</name>
<keyword id="KW-0903">Direct protein sequencing</keyword>
<keyword id="KW-0964">Secreted</keyword>
<keyword id="KW-0732">Signal</keyword>
<feature type="signal peptide" evidence="1">
    <location>
        <begin position="1"/>
        <end position="19"/>
    </location>
</feature>
<feature type="chain" id="PRO_0000415247" description="Glycine and methionine-rich protein" evidence="1">
    <location>
        <begin position="20"/>
        <end position="151"/>
    </location>
</feature>
<protein>
    <recommendedName>
        <fullName>Glycine and methionine-rich protein</fullName>
    </recommendedName>
    <alternativeName>
        <fullName>Uncharacterized shell protein 11</fullName>
        <shortName>LUSP-11</shortName>
    </alternativeName>
</protein>
<proteinExistence type="evidence at protein level"/>
<sequence>MKTAVVLAAFSALMALARAQSPLASMGGGGSPMGMGMGMGMNRMMLPMLMGGMDMKHFALMNMLGGGGGMGGSRMLPLMAALRGNENMLPILLAAKGGMSNPLAMMAMLGGNDNLMNMLPLMMSSGMGMGGGGGMMRGAGAAGGGAAGPGM</sequence>
<accession>B3A0R1</accession>